<name>C515A_DICDI</name>
<protein>
    <recommendedName>
        <fullName>Probable cytochrome P450 515A1</fullName>
        <ecNumber>1.14.-.-</ecNumber>
    </recommendedName>
</protein>
<comment type="cofactor">
    <cofactor evidence="1">
        <name>heme</name>
        <dbReference type="ChEBI" id="CHEBI:30413"/>
    </cofactor>
</comment>
<comment type="subcellular location">
    <subcellularLocation>
        <location evidence="3">Membrane</location>
        <topology evidence="3">Single-pass membrane protein</topology>
    </subcellularLocation>
</comment>
<comment type="similarity">
    <text evidence="3">Belongs to the cytochrome P450 family.</text>
</comment>
<sequence length="494" mass="57572">MILGIILGLFIYIYLINIKFFNRAVPSSLLVGENKLKCKFPSGPLILPIIGSLYKLSLKYPHLSFKQLSDKYGKVFSLKMGSIDTIVINDINFLQKSFRDNPTFFSQRFHLPSFYYMGKYQGIIFGNGSHWRKLKDILSSSITKSKSRQMEELFYNEYFKAEEYLLKKINQDNNIDMGPIFKRILLNILYRFLFGVSFEYDDNLLSKEFYSFIQSYNKLFEYLAKQPADFIPILKPFNNYKEIEKEYNNCLNFFQPLIDNILKNISDDDDDGNEPKCFLEYFISEIRKDTSNLIKITDLPYICFDIIVAGIVTTSTTMDWMLLYLTNYPNIQEKLFFEINTPNHPLHKDKLQFPYLNSIIKETLRISPPAPFALPHICTDDIVIDDIFIPKNTQVIPNIYGCNRSNIESSESNVFNPDHFLSKDELNIGQCAFSFGSRQCPGANVADSIMFLVSTKLYKTFKFERTTTQLNDENGHFTRSLSPFEFKSKLIIRK</sequence>
<proteinExistence type="inferred from homology"/>
<organism>
    <name type="scientific">Dictyostelium discoideum</name>
    <name type="common">Social amoeba</name>
    <dbReference type="NCBI Taxonomy" id="44689"/>
    <lineage>
        <taxon>Eukaryota</taxon>
        <taxon>Amoebozoa</taxon>
        <taxon>Evosea</taxon>
        <taxon>Eumycetozoa</taxon>
        <taxon>Dictyostelia</taxon>
        <taxon>Dictyosteliales</taxon>
        <taxon>Dictyosteliaceae</taxon>
        <taxon>Dictyostelium</taxon>
    </lineage>
</organism>
<dbReference type="EC" id="1.14.-.-"/>
<dbReference type="EMBL" id="AAFI02000008">
    <property type="protein sequence ID" value="EAS66952.1"/>
    <property type="molecule type" value="Genomic_DNA"/>
</dbReference>
<dbReference type="RefSeq" id="XP_001134618.1">
    <property type="nucleotide sequence ID" value="XM_001134618.1"/>
</dbReference>
<dbReference type="SMR" id="Q86A22"/>
<dbReference type="FunCoup" id="Q86A22">
    <property type="interactions" value="1"/>
</dbReference>
<dbReference type="STRING" id="44689.Q86A22"/>
<dbReference type="PaxDb" id="44689-DDB0232986"/>
<dbReference type="EnsemblProtists" id="EAS66952">
    <property type="protein sequence ID" value="EAS66952"/>
    <property type="gene ID" value="DDB_G0272704"/>
</dbReference>
<dbReference type="GeneID" id="8618556"/>
<dbReference type="KEGG" id="ddi:DDB_G0272704"/>
<dbReference type="dictyBase" id="DDB_G0272704">
    <property type="gene designation" value="cyp515A1"/>
</dbReference>
<dbReference type="VEuPathDB" id="AmoebaDB:DDB_G0272704"/>
<dbReference type="eggNOG" id="KOG0156">
    <property type="taxonomic scope" value="Eukaryota"/>
</dbReference>
<dbReference type="HOGENOM" id="CLU_001570_22_3_1"/>
<dbReference type="InParanoid" id="Q86A22"/>
<dbReference type="OMA" id="LYMAREQ"/>
<dbReference type="PhylomeDB" id="Q86A22"/>
<dbReference type="Reactome" id="R-DDI-211935">
    <property type="pathway name" value="Fatty acids"/>
</dbReference>
<dbReference type="Reactome" id="R-DDI-211945">
    <property type="pathway name" value="Phase I - Functionalization of compounds"/>
</dbReference>
<dbReference type="Reactome" id="R-DDI-211958">
    <property type="pathway name" value="Miscellaneous substrates"/>
</dbReference>
<dbReference type="Reactome" id="R-DDI-211981">
    <property type="pathway name" value="Xenobiotics"/>
</dbReference>
<dbReference type="Reactome" id="R-DDI-211999">
    <property type="pathway name" value="CYP2E1 reactions"/>
</dbReference>
<dbReference type="Reactome" id="R-DDI-2142670">
    <property type="pathway name" value="Synthesis of epoxy (EET) and dihydroxyeicosatrienoic acids (DHET)"/>
</dbReference>
<dbReference type="Reactome" id="R-DDI-2142816">
    <property type="pathway name" value="Synthesis of (16-20)-hydroxyeicosatetraenoic acids (HETE)"/>
</dbReference>
<dbReference type="Reactome" id="R-DDI-5423646">
    <property type="pathway name" value="Aflatoxin activation and detoxification"/>
</dbReference>
<dbReference type="Reactome" id="R-DDI-9027307">
    <property type="pathway name" value="Biosynthesis of maresin-like SPMs"/>
</dbReference>
<dbReference type="Reactome" id="R-DDI-9749641">
    <property type="pathway name" value="Aspirin ADME"/>
</dbReference>
<dbReference type="Reactome" id="R-DDI-9753281">
    <property type="pathway name" value="Paracetamol ADME"/>
</dbReference>
<dbReference type="PRO" id="PR:Q86A22"/>
<dbReference type="Proteomes" id="UP000002195">
    <property type="component" value="Chromosome 2"/>
</dbReference>
<dbReference type="GO" id="GO:0005737">
    <property type="term" value="C:cytoplasm"/>
    <property type="evidence" value="ECO:0000318"/>
    <property type="project" value="GO_Central"/>
</dbReference>
<dbReference type="GO" id="GO:0043231">
    <property type="term" value="C:intracellular membrane-bounded organelle"/>
    <property type="evidence" value="ECO:0000318"/>
    <property type="project" value="GO_Central"/>
</dbReference>
<dbReference type="GO" id="GO:0016020">
    <property type="term" value="C:membrane"/>
    <property type="evidence" value="ECO:0007669"/>
    <property type="project" value="UniProtKB-SubCell"/>
</dbReference>
<dbReference type="GO" id="GO:0020037">
    <property type="term" value="F:heme binding"/>
    <property type="evidence" value="ECO:0000318"/>
    <property type="project" value="GO_Central"/>
</dbReference>
<dbReference type="GO" id="GO:0005506">
    <property type="term" value="F:iron ion binding"/>
    <property type="evidence" value="ECO:0007669"/>
    <property type="project" value="InterPro"/>
</dbReference>
<dbReference type="GO" id="GO:0016712">
    <property type="term" value="F:oxidoreductase activity, acting on paired donors, with incorporation or reduction of molecular oxygen, reduced flavin or flavoprotein as one donor, and incorporation of one atom of oxygen"/>
    <property type="evidence" value="ECO:0000318"/>
    <property type="project" value="GO_Central"/>
</dbReference>
<dbReference type="GO" id="GO:0006082">
    <property type="term" value="P:organic acid metabolic process"/>
    <property type="evidence" value="ECO:0000318"/>
    <property type="project" value="GO_Central"/>
</dbReference>
<dbReference type="GO" id="GO:0006805">
    <property type="term" value="P:xenobiotic metabolic process"/>
    <property type="evidence" value="ECO:0000318"/>
    <property type="project" value="GO_Central"/>
</dbReference>
<dbReference type="CDD" id="cd20617">
    <property type="entry name" value="CYP1_2-like"/>
    <property type="match status" value="1"/>
</dbReference>
<dbReference type="FunFam" id="1.10.630.10:FF:000078">
    <property type="entry name" value="Probable cytochrome P450 515A1"/>
    <property type="match status" value="1"/>
</dbReference>
<dbReference type="Gene3D" id="1.10.630.10">
    <property type="entry name" value="Cytochrome P450"/>
    <property type="match status" value="1"/>
</dbReference>
<dbReference type="InterPro" id="IPR001128">
    <property type="entry name" value="Cyt_P450"/>
</dbReference>
<dbReference type="InterPro" id="IPR017972">
    <property type="entry name" value="Cyt_P450_CS"/>
</dbReference>
<dbReference type="InterPro" id="IPR002401">
    <property type="entry name" value="Cyt_P450_E_grp-I"/>
</dbReference>
<dbReference type="InterPro" id="IPR036396">
    <property type="entry name" value="Cyt_P450_sf"/>
</dbReference>
<dbReference type="PANTHER" id="PTHR24303:SF31">
    <property type="entry name" value="CYTOCHROME P450 307A1-RELATED"/>
    <property type="match status" value="1"/>
</dbReference>
<dbReference type="PANTHER" id="PTHR24303">
    <property type="entry name" value="HEME-BINDING MONOOXYGENASE FAMILY"/>
    <property type="match status" value="1"/>
</dbReference>
<dbReference type="Pfam" id="PF00067">
    <property type="entry name" value="p450"/>
    <property type="match status" value="1"/>
</dbReference>
<dbReference type="PRINTS" id="PR00463">
    <property type="entry name" value="EP450I"/>
</dbReference>
<dbReference type="PRINTS" id="PR00385">
    <property type="entry name" value="P450"/>
</dbReference>
<dbReference type="SUPFAM" id="SSF48264">
    <property type="entry name" value="Cytochrome P450"/>
    <property type="match status" value="1"/>
</dbReference>
<dbReference type="PROSITE" id="PS00086">
    <property type="entry name" value="CYTOCHROME_P450"/>
    <property type="match status" value="1"/>
</dbReference>
<evidence type="ECO:0000250" key="1"/>
<evidence type="ECO:0000255" key="2"/>
<evidence type="ECO:0000305" key="3"/>
<feature type="chain" id="PRO_0000318823" description="Probable cytochrome P450 515A1">
    <location>
        <begin position="1"/>
        <end position="494"/>
    </location>
</feature>
<feature type="transmembrane region" description="Helical" evidence="2">
    <location>
        <begin position="1"/>
        <end position="21"/>
    </location>
</feature>
<feature type="binding site" description="axial binding residue" evidence="1">
    <location>
        <position position="440"/>
    </location>
    <ligand>
        <name>heme</name>
        <dbReference type="ChEBI" id="CHEBI:30413"/>
    </ligand>
    <ligandPart>
        <name>Fe</name>
        <dbReference type="ChEBI" id="CHEBI:18248"/>
    </ligandPart>
</feature>
<keyword id="KW-0349">Heme</keyword>
<keyword id="KW-0408">Iron</keyword>
<keyword id="KW-0472">Membrane</keyword>
<keyword id="KW-0479">Metal-binding</keyword>
<keyword id="KW-0503">Monooxygenase</keyword>
<keyword id="KW-0560">Oxidoreductase</keyword>
<keyword id="KW-1185">Reference proteome</keyword>
<keyword id="KW-0812">Transmembrane</keyword>
<keyword id="KW-1133">Transmembrane helix</keyword>
<reference key="1">
    <citation type="journal article" date="2002" name="Nature">
        <title>Sequence and analysis of chromosome 2 of Dictyostelium discoideum.</title>
        <authorList>
            <person name="Gloeckner G."/>
            <person name="Eichinger L."/>
            <person name="Szafranski K."/>
            <person name="Pachebat J.A."/>
            <person name="Bankier A.T."/>
            <person name="Dear P.H."/>
            <person name="Lehmann R."/>
            <person name="Baumgart C."/>
            <person name="Parra G."/>
            <person name="Abril J.F."/>
            <person name="Guigo R."/>
            <person name="Kumpf K."/>
            <person name="Tunggal B."/>
            <person name="Cox E.C."/>
            <person name="Quail M.A."/>
            <person name="Platzer M."/>
            <person name="Rosenthal A."/>
            <person name="Noegel A.A."/>
        </authorList>
    </citation>
    <scope>NUCLEOTIDE SEQUENCE [LARGE SCALE GENOMIC DNA]</scope>
    <source>
        <strain>AX4</strain>
    </source>
</reference>
<reference key="2">
    <citation type="journal article" date="2005" name="Nature">
        <title>The genome of the social amoeba Dictyostelium discoideum.</title>
        <authorList>
            <person name="Eichinger L."/>
            <person name="Pachebat J.A."/>
            <person name="Gloeckner G."/>
            <person name="Rajandream M.A."/>
            <person name="Sucgang R."/>
            <person name="Berriman M."/>
            <person name="Song J."/>
            <person name="Olsen R."/>
            <person name="Szafranski K."/>
            <person name="Xu Q."/>
            <person name="Tunggal B."/>
            <person name="Kummerfeld S."/>
            <person name="Madera M."/>
            <person name="Konfortov B.A."/>
            <person name="Rivero F."/>
            <person name="Bankier A.T."/>
            <person name="Lehmann R."/>
            <person name="Hamlin N."/>
            <person name="Davies R."/>
            <person name="Gaudet P."/>
            <person name="Fey P."/>
            <person name="Pilcher K."/>
            <person name="Chen G."/>
            <person name="Saunders D."/>
            <person name="Sodergren E.J."/>
            <person name="Davis P."/>
            <person name="Kerhornou A."/>
            <person name="Nie X."/>
            <person name="Hall N."/>
            <person name="Anjard C."/>
            <person name="Hemphill L."/>
            <person name="Bason N."/>
            <person name="Farbrother P."/>
            <person name="Desany B."/>
            <person name="Just E."/>
            <person name="Morio T."/>
            <person name="Rost R."/>
            <person name="Churcher C.M."/>
            <person name="Cooper J."/>
            <person name="Haydock S."/>
            <person name="van Driessche N."/>
            <person name="Cronin A."/>
            <person name="Goodhead I."/>
            <person name="Muzny D.M."/>
            <person name="Mourier T."/>
            <person name="Pain A."/>
            <person name="Lu M."/>
            <person name="Harper D."/>
            <person name="Lindsay R."/>
            <person name="Hauser H."/>
            <person name="James K.D."/>
            <person name="Quiles M."/>
            <person name="Madan Babu M."/>
            <person name="Saito T."/>
            <person name="Buchrieser C."/>
            <person name="Wardroper A."/>
            <person name="Felder M."/>
            <person name="Thangavelu M."/>
            <person name="Johnson D."/>
            <person name="Knights A."/>
            <person name="Loulseged H."/>
            <person name="Mungall K.L."/>
            <person name="Oliver K."/>
            <person name="Price C."/>
            <person name="Quail M.A."/>
            <person name="Urushihara H."/>
            <person name="Hernandez J."/>
            <person name="Rabbinowitsch E."/>
            <person name="Steffen D."/>
            <person name="Sanders M."/>
            <person name="Ma J."/>
            <person name="Kohara Y."/>
            <person name="Sharp S."/>
            <person name="Simmonds M.N."/>
            <person name="Spiegler S."/>
            <person name="Tivey A."/>
            <person name="Sugano S."/>
            <person name="White B."/>
            <person name="Walker D."/>
            <person name="Woodward J.R."/>
            <person name="Winckler T."/>
            <person name="Tanaka Y."/>
            <person name="Shaulsky G."/>
            <person name="Schleicher M."/>
            <person name="Weinstock G.M."/>
            <person name="Rosenthal A."/>
            <person name="Cox E.C."/>
            <person name="Chisholm R.L."/>
            <person name="Gibbs R.A."/>
            <person name="Loomis W.F."/>
            <person name="Platzer M."/>
            <person name="Kay R.R."/>
            <person name="Williams J.G."/>
            <person name="Dear P.H."/>
            <person name="Noegel A.A."/>
            <person name="Barrell B.G."/>
            <person name="Kuspa A."/>
        </authorList>
    </citation>
    <scope>NUCLEOTIDE SEQUENCE [LARGE SCALE GENOMIC DNA]</scope>
    <source>
        <strain>AX4</strain>
    </source>
</reference>
<accession>Q86A22</accession>
<accession>Q1ZXN3</accession>
<gene>
    <name type="primary">cyp515A1</name>
    <name type="ORF">DDB_G0272704</name>
</gene>